<keyword id="KW-0472">Membrane</keyword>
<keyword id="KW-0576">Peroxisome</keyword>
<keyword id="KW-0653">Protein transport</keyword>
<keyword id="KW-1185">Reference proteome</keyword>
<keyword id="KW-0813">Transport</keyword>
<reference key="1">
    <citation type="journal article" date="1995" name="Yeast">
        <title>The sequence of a 13.5 kb DNA segment from the left arm of yeast chromosome XIV reveals MER1; RAP1; a new putative member of the DNA replication complex and a new putative serine/threonine phosphatase gene.</title>
        <authorList>
            <person name="Coster F."/>
            <person name="van Dyck L."/>
            <person name="Jonniaux J.-L."/>
            <person name="Purnelle B."/>
            <person name="Goffeau A."/>
        </authorList>
    </citation>
    <scope>NUCLEOTIDE SEQUENCE [GENOMIC DNA]</scope>
    <source>
        <strain>ATCC 96604 / S288c / FY1679</strain>
    </source>
</reference>
<reference key="2">
    <citation type="journal article" date="1997" name="Nature">
        <title>The nucleotide sequence of Saccharomyces cerevisiae chromosome XIV and its evolutionary implications.</title>
        <authorList>
            <person name="Philippsen P."/>
            <person name="Kleine K."/>
            <person name="Poehlmann R."/>
            <person name="Duesterhoeft A."/>
            <person name="Hamberg K."/>
            <person name="Hegemann J.H."/>
            <person name="Obermaier B."/>
            <person name="Urrestarazu L.A."/>
            <person name="Aert R."/>
            <person name="Albermann K."/>
            <person name="Altmann R."/>
            <person name="Andre B."/>
            <person name="Baladron V."/>
            <person name="Ballesta J.P.G."/>
            <person name="Becam A.-M."/>
            <person name="Beinhauer J.D."/>
            <person name="Boskovic J."/>
            <person name="Buitrago M.J."/>
            <person name="Bussereau F."/>
            <person name="Coster F."/>
            <person name="Crouzet M."/>
            <person name="D'Angelo M."/>
            <person name="Dal Pero F."/>
            <person name="De Antoni A."/>
            <person name="del Rey F."/>
            <person name="Doignon F."/>
            <person name="Domdey H."/>
            <person name="Dubois E."/>
            <person name="Fiedler T.A."/>
            <person name="Fleig U."/>
            <person name="Floeth M."/>
            <person name="Fritz C."/>
            <person name="Gaillardin C."/>
            <person name="Garcia-Cantalejo J.M."/>
            <person name="Glansdorff N."/>
            <person name="Goffeau A."/>
            <person name="Gueldener U."/>
            <person name="Herbert C.J."/>
            <person name="Heumann K."/>
            <person name="Heuss-Neitzel D."/>
            <person name="Hilbert H."/>
            <person name="Hinni K."/>
            <person name="Iraqui Houssaini I."/>
            <person name="Jacquet M."/>
            <person name="Jimenez A."/>
            <person name="Jonniaux J.-L."/>
            <person name="Karpfinger-Hartl L."/>
            <person name="Lanfranchi G."/>
            <person name="Lepingle A."/>
            <person name="Levesque H."/>
            <person name="Lyck R."/>
            <person name="Maftahi M."/>
            <person name="Mallet L."/>
            <person name="Maurer C.T.C."/>
            <person name="Messenguy F."/>
            <person name="Mewes H.-W."/>
            <person name="Moestl D."/>
            <person name="Nasr F."/>
            <person name="Nicaud J.-M."/>
            <person name="Niedenthal R.K."/>
            <person name="Pandolfo D."/>
            <person name="Pierard A."/>
            <person name="Piravandi E."/>
            <person name="Planta R.J."/>
            <person name="Pohl T.M."/>
            <person name="Purnelle B."/>
            <person name="Rebischung C."/>
            <person name="Remacha M.A."/>
            <person name="Revuelta J.L."/>
            <person name="Rinke M."/>
            <person name="Saiz J.E."/>
            <person name="Sartorello F."/>
            <person name="Scherens B."/>
            <person name="Sen-Gupta M."/>
            <person name="Soler-Mira A."/>
            <person name="Urbanus J.H.M."/>
            <person name="Valle G."/>
            <person name="Van Dyck L."/>
            <person name="Verhasselt P."/>
            <person name="Vierendeels F."/>
            <person name="Vissers S."/>
            <person name="Voet M."/>
            <person name="Volckaert G."/>
            <person name="Wach A."/>
            <person name="Wambutt R."/>
            <person name="Wedler H."/>
            <person name="Zollner A."/>
            <person name="Hani J."/>
        </authorList>
    </citation>
    <scope>NUCLEOTIDE SEQUENCE [LARGE SCALE GENOMIC DNA]</scope>
    <source>
        <strain>ATCC 204508 / S288c</strain>
    </source>
</reference>
<reference key="3">
    <citation type="journal article" date="2014" name="G3 (Bethesda)">
        <title>The reference genome sequence of Saccharomyces cerevisiae: Then and now.</title>
        <authorList>
            <person name="Engel S.R."/>
            <person name="Dietrich F.S."/>
            <person name="Fisk D.G."/>
            <person name="Binkley G."/>
            <person name="Balakrishnan R."/>
            <person name="Costanzo M.C."/>
            <person name="Dwight S.S."/>
            <person name="Hitz B.C."/>
            <person name="Karra K."/>
            <person name="Nash R.S."/>
            <person name="Weng S."/>
            <person name="Wong E.D."/>
            <person name="Lloyd P."/>
            <person name="Skrzypek M.S."/>
            <person name="Miyasato S.R."/>
            <person name="Simison M."/>
            <person name="Cherry J.M."/>
        </authorList>
    </citation>
    <scope>GENOME REANNOTATION</scope>
    <source>
        <strain>ATCC 204508 / S288c</strain>
    </source>
</reference>
<reference key="4">
    <citation type="journal article" date="1998" name="J. Cell Biol.">
        <title>Pex17p of Saccharomyces cerevisiae is a novel peroxin and component of the peroxisomal protein translocation machinery.</title>
        <authorList>
            <person name="Huhse B."/>
            <person name="Rehling P."/>
            <person name="Albertini M."/>
            <person name="Blank L."/>
            <person name="Meller K."/>
            <person name="Kunau W.-H."/>
        </authorList>
    </citation>
    <scope>CHARACTERIZATION</scope>
</reference>
<reference key="5">
    <citation type="journal article" date="2003" name="Nature">
        <title>Global analysis of protein expression in yeast.</title>
        <authorList>
            <person name="Ghaemmaghami S."/>
            <person name="Huh W.-K."/>
            <person name="Bower K."/>
            <person name="Howson R.W."/>
            <person name="Belle A."/>
            <person name="Dephoure N."/>
            <person name="O'Shea E.K."/>
            <person name="Weissman J.S."/>
        </authorList>
    </citation>
    <scope>LEVEL OF PROTEIN EXPRESSION [LARGE SCALE ANALYSIS]</scope>
</reference>
<proteinExistence type="evidence at protein level"/>
<gene>
    <name type="primary">PEX17</name>
    <name type="synonym">PAS9</name>
    <name type="ordered locus">YNL214W</name>
    <name type="ORF">N1319</name>
</gene>
<sequence length="199" mass="23169">MTSINSFPRNIDWPSNIGIKKIEGTNPTVNAIKGLLYNGGSIYAFLYFVIAMFVEPTLQKQYQQRNDFSLFVLLRLRRIIAQLQKRLVMTPVSSLGFNEQNNFVERSTQTSDDNIIREDNSHWAEMIYQLQNMKQELQYFNRSSGQPSESIDDFVFQIKMVTDQVELTDRSRAFSNKSRNIIQGIREIKGWFVNGQVPR</sequence>
<dbReference type="EMBL" id="X78898">
    <property type="protein sequence ID" value="CAA55494.1"/>
    <property type="molecule type" value="Genomic_DNA"/>
</dbReference>
<dbReference type="EMBL" id="Z71490">
    <property type="protein sequence ID" value="CAA96116.1"/>
    <property type="molecule type" value="Genomic_DNA"/>
</dbReference>
<dbReference type="EMBL" id="BK006947">
    <property type="protein sequence ID" value="DAA10342.1"/>
    <property type="molecule type" value="Genomic_DNA"/>
</dbReference>
<dbReference type="PIR" id="S50717">
    <property type="entry name" value="S50717"/>
</dbReference>
<dbReference type="RefSeq" id="NP_014185.1">
    <property type="nucleotide sequence ID" value="NM_001183052.1"/>
</dbReference>
<dbReference type="SMR" id="P40155"/>
<dbReference type="BioGRID" id="35622">
    <property type="interactions" value="107"/>
</dbReference>
<dbReference type="ComplexPortal" id="CPX-1904">
    <property type="entry name" value="Peroxisomal PEX13-PEX14-PEX17 docking complex"/>
</dbReference>
<dbReference type="DIP" id="DIP-2474N"/>
<dbReference type="FunCoup" id="P40155">
    <property type="interactions" value="35"/>
</dbReference>
<dbReference type="IntAct" id="P40155">
    <property type="interactions" value="12"/>
</dbReference>
<dbReference type="MINT" id="P40155"/>
<dbReference type="STRING" id="4932.YNL214W"/>
<dbReference type="TCDB" id="3.A.20.1.5">
    <property type="family name" value="the peroxisomal protein importer (ppi) family"/>
</dbReference>
<dbReference type="PaxDb" id="4932-YNL214W"/>
<dbReference type="PeptideAtlas" id="P40155"/>
<dbReference type="EnsemblFungi" id="YNL214W_mRNA">
    <property type="protein sequence ID" value="YNL214W"/>
    <property type="gene ID" value="YNL214W"/>
</dbReference>
<dbReference type="GeneID" id="855507"/>
<dbReference type="KEGG" id="sce:YNL214W"/>
<dbReference type="AGR" id="SGD:S000005158"/>
<dbReference type="SGD" id="S000005158">
    <property type="gene designation" value="PEX17"/>
</dbReference>
<dbReference type="VEuPathDB" id="FungiDB:YNL214W"/>
<dbReference type="eggNOG" id="ENOG502S4G6">
    <property type="taxonomic scope" value="Eukaryota"/>
</dbReference>
<dbReference type="HOGENOM" id="CLU_115007_0_0_1"/>
<dbReference type="InParanoid" id="P40155"/>
<dbReference type="OMA" id="REMKGWF"/>
<dbReference type="OrthoDB" id="4034942at2759"/>
<dbReference type="BioCyc" id="YEAST:G3O-33220-MONOMER"/>
<dbReference type="BioGRID-ORCS" id="855507">
    <property type="hits" value="2 hits in 10 CRISPR screens"/>
</dbReference>
<dbReference type="PRO" id="PR:P40155"/>
<dbReference type="Proteomes" id="UP000002311">
    <property type="component" value="Chromosome XIV"/>
</dbReference>
<dbReference type="RNAct" id="P40155">
    <property type="molecule type" value="protein"/>
</dbReference>
<dbReference type="GO" id="GO:1990429">
    <property type="term" value="C:peroxisomal importomer complex"/>
    <property type="evidence" value="ECO:0000314"/>
    <property type="project" value="SGD"/>
</dbReference>
<dbReference type="GO" id="GO:0005778">
    <property type="term" value="C:peroxisomal membrane"/>
    <property type="evidence" value="ECO:0000314"/>
    <property type="project" value="ComplexPortal"/>
</dbReference>
<dbReference type="GO" id="GO:1902495">
    <property type="term" value="C:transmembrane transporter complex"/>
    <property type="evidence" value="ECO:0000314"/>
    <property type="project" value="UniProt"/>
</dbReference>
<dbReference type="GO" id="GO:0016560">
    <property type="term" value="P:protein import into peroxisome matrix, docking"/>
    <property type="evidence" value="ECO:0000353"/>
    <property type="project" value="SGD"/>
</dbReference>
<name>PEX17_YEAST</name>
<organism>
    <name type="scientific">Saccharomyces cerevisiae (strain ATCC 204508 / S288c)</name>
    <name type="common">Baker's yeast</name>
    <dbReference type="NCBI Taxonomy" id="559292"/>
    <lineage>
        <taxon>Eukaryota</taxon>
        <taxon>Fungi</taxon>
        <taxon>Dikarya</taxon>
        <taxon>Ascomycota</taxon>
        <taxon>Saccharomycotina</taxon>
        <taxon>Saccharomycetes</taxon>
        <taxon>Saccharomycetales</taxon>
        <taxon>Saccharomycetaceae</taxon>
        <taxon>Saccharomyces</taxon>
    </lineage>
</organism>
<evidence type="ECO:0000269" key="1">
    <source>
    </source>
</evidence>
<protein>
    <recommendedName>
        <fullName>Peroxisomal membrane protein PEX17</fullName>
    </recommendedName>
    <alternativeName>
        <fullName>Peroxin-17</fullName>
    </alternativeName>
</protein>
<feature type="chain" id="PRO_0000058333" description="Peroxisomal membrane protein PEX17">
    <location>
        <begin position="1"/>
        <end position="199"/>
    </location>
</feature>
<comment type="function">
    <text>Component of the peroxisomal translocation machinery with PEX13 and PEX14. Interacts indirectly with the PTS1 receptor (PAS10/PEX5) and directly binds to PEX14. Required for import of both PTS1 and PTS2 proteins.</text>
</comment>
<comment type="interaction">
    <interactant intactId="EBI-13218">
        <id>P40155</id>
    </interactant>
    <interactant intactId="EBI-13212">
        <id>P53112</id>
        <label>PEX14</label>
    </interactant>
    <organismsDiffer>false</organismsDiffer>
    <experiments>15</experiments>
</comment>
<comment type="subcellular location">
    <subcellularLocation>
        <location>Peroxisome membrane</location>
        <topology>Peripheral membrane protein</topology>
        <orientation>Cytoplasmic side</orientation>
    </subcellularLocation>
</comment>
<comment type="miscellaneous">
    <text evidence="1">Present with 656 molecules/cell in log phase SD medium.</text>
</comment>
<accession>P40155</accession>
<accession>D6W0X6</accession>